<proteinExistence type="inferred from homology"/>
<feature type="chain" id="PRO_1000089517" description="Ribosome maturation factor RimM">
    <location>
        <begin position="1"/>
        <end position="182"/>
    </location>
</feature>
<feature type="domain" description="PRC barrel" evidence="1">
    <location>
        <begin position="102"/>
        <end position="182"/>
    </location>
</feature>
<protein>
    <recommendedName>
        <fullName evidence="1">Ribosome maturation factor RimM</fullName>
    </recommendedName>
</protein>
<keyword id="KW-0143">Chaperone</keyword>
<keyword id="KW-0963">Cytoplasm</keyword>
<keyword id="KW-0690">Ribosome biogenesis</keyword>
<keyword id="KW-0698">rRNA processing</keyword>
<organism>
    <name type="scientific">Salmonella enteritidis PT4 (strain P125109)</name>
    <dbReference type="NCBI Taxonomy" id="550537"/>
    <lineage>
        <taxon>Bacteria</taxon>
        <taxon>Pseudomonadati</taxon>
        <taxon>Pseudomonadota</taxon>
        <taxon>Gammaproteobacteria</taxon>
        <taxon>Enterobacterales</taxon>
        <taxon>Enterobacteriaceae</taxon>
        <taxon>Salmonella</taxon>
    </lineage>
</organism>
<comment type="function">
    <text evidence="1">An accessory protein needed during the final step in the assembly of 30S ribosomal subunit, possibly for assembly of the head region. Essential for efficient processing of 16S rRNA. May be needed both before and after RbfA during the maturation of 16S rRNA. It has affinity for free ribosomal 30S subunits but not for 70S ribosomes.</text>
</comment>
<comment type="subunit">
    <text evidence="1">Binds ribosomal protein uS19.</text>
</comment>
<comment type="subcellular location">
    <subcellularLocation>
        <location evidence="1">Cytoplasm</location>
    </subcellularLocation>
</comment>
<comment type="domain">
    <text evidence="1">The PRC barrel domain binds ribosomal protein uS19.</text>
</comment>
<comment type="similarity">
    <text evidence="1">Belongs to the RimM family.</text>
</comment>
<sequence>MSKQLAAQVPAEPVVLGKMGSSYGIRGWLRVFSSTEDAESIFDYQPWFIQKAGQWQQVQLESWKHHNQDLIIKLKGVDDRDAANLLTNCEIVVDSSQLPALEEGDYYWKDLMGCQVVTAEGYDLGKVIDMMETGSNDVLVIKANLKDAFGIKERLVPFLDGQVIKKVDLATRTIEVDWDPGF</sequence>
<reference key="1">
    <citation type="journal article" date="2008" name="Genome Res.">
        <title>Comparative genome analysis of Salmonella enteritidis PT4 and Salmonella gallinarum 287/91 provides insights into evolutionary and host adaptation pathways.</title>
        <authorList>
            <person name="Thomson N.R."/>
            <person name="Clayton D.J."/>
            <person name="Windhorst D."/>
            <person name="Vernikos G."/>
            <person name="Davidson S."/>
            <person name="Churcher C."/>
            <person name="Quail M.A."/>
            <person name="Stevens M."/>
            <person name="Jones M.A."/>
            <person name="Watson M."/>
            <person name="Barron A."/>
            <person name="Layton A."/>
            <person name="Pickard D."/>
            <person name="Kingsley R.A."/>
            <person name="Bignell A."/>
            <person name="Clark L."/>
            <person name="Harris B."/>
            <person name="Ormond D."/>
            <person name="Abdellah Z."/>
            <person name="Brooks K."/>
            <person name="Cherevach I."/>
            <person name="Chillingworth T."/>
            <person name="Woodward J."/>
            <person name="Norberczak H."/>
            <person name="Lord A."/>
            <person name="Arrowsmith C."/>
            <person name="Jagels K."/>
            <person name="Moule S."/>
            <person name="Mungall K."/>
            <person name="Saunders M."/>
            <person name="Whitehead S."/>
            <person name="Chabalgoity J.A."/>
            <person name="Maskell D."/>
            <person name="Humphreys T."/>
            <person name="Roberts M."/>
            <person name="Barrow P.A."/>
            <person name="Dougan G."/>
            <person name="Parkhill J."/>
        </authorList>
    </citation>
    <scope>NUCLEOTIDE SEQUENCE [LARGE SCALE GENOMIC DNA]</scope>
    <source>
        <strain>P125109</strain>
    </source>
</reference>
<gene>
    <name evidence="1" type="primary">rimM</name>
    <name type="ordered locus">SEN2596</name>
</gene>
<name>RIMM_SALEP</name>
<accession>B5QUG3</accession>
<evidence type="ECO:0000255" key="1">
    <source>
        <dbReference type="HAMAP-Rule" id="MF_00014"/>
    </source>
</evidence>
<dbReference type="EMBL" id="AM933172">
    <property type="protein sequence ID" value="CAR34178.1"/>
    <property type="molecule type" value="Genomic_DNA"/>
</dbReference>
<dbReference type="RefSeq" id="WP_000043266.1">
    <property type="nucleotide sequence ID" value="NC_011294.1"/>
</dbReference>
<dbReference type="SMR" id="B5QUG3"/>
<dbReference type="KEGG" id="set:SEN2596"/>
<dbReference type="HOGENOM" id="CLU_077636_1_0_6"/>
<dbReference type="Proteomes" id="UP000000613">
    <property type="component" value="Chromosome"/>
</dbReference>
<dbReference type="GO" id="GO:0005737">
    <property type="term" value="C:cytoplasm"/>
    <property type="evidence" value="ECO:0007669"/>
    <property type="project" value="UniProtKB-SubCell"/>
</dbReference>
<dbReference type="GO" id="GO:0005840">
    <property type="term" value="C:ribosome"/>
    <property type="evidence" value="ECO:0007669"/>
    <property type="project" value="InterPro"/>
</dbReference>
<dbReference type="GO" id="GO:0043022">
    <property type="term" value="F:ribosome binding"/>
    <property type="evidence" value="ECO:0007669"/>
    <property type="project" value="InterPro"/>
</dbReference>
<dbReference type="GO" id="GO:0042274">
    <property type="term" value="P:ribosomal small subunit biogenesis"/>
    <property type="evidence" value="ECO:0007669"/>
    <property type="project" value="UniProtKB-UniRule"/>
</dbReference>
<dbReference type="GO" id="GO:0006364">
    <property type="term" value="P:rRNA processing"/>
    <property type="evidence" value="ECO:0007669"/>
    <property type="project" value="UniProtKB-UniRule"/>
</dbReference>
<dbReference type="FunFam" id="2.30.30.240:FF:000001">
    <property type="entry name" value="Ribosome maturation factor RimM"/>
    <property type="match status" value="1"/>
</dbReference>
<dbReference type="FunFam" id="2.40.30.60:FF:000001">
    <property type="entry name" value="Ribosome maturation factor RimM"/>
    <property type="match status" value="1"/>
</dbReference>
<dbReference type="Gene3D" id="2.30.30.240">
    <property type="entry name" value="PRC-barrel domain"/>
    <property type="match status" value="1"/>
</dbReference>
<dbReference type="Gene3D" id="2.40.30.60">
    <property type="entry name" value="RimM"/>
    <property type="match status" value="1"/>
</dbReference>
<dbReference type="HAMAP" id="MF_00014">
    <property type="entry name" value="Ribosome_mat_RimM"/>
    <property type="match status" value="1"/>
</dbReference>
<dbReference type="InterPro" id="IPR011033">
    <property type="entry name" value="PRC_barrel-like_sf"/>
</dbReference>
<dbReference type="InterPro" id="IPR056792">
    <property type="entry name" value="PRC_RimM"/>
</dbReference>
<dbReference type="InterPro" id="IPR011961">
    <property type="entry name" value="RimM"/>
</dbReference>
<dbReference type="InterPro" id="IPR002676">
    <property type="entry name" value="RimM_N"/>
</dbReference>
<dbReference type="InterPro" id="IPR036976">
    <property type="entry name" value="RimM_N_sf"/>
</dbReference>
<dbReference type="InterPro" id="IPR009000">
    <property type="entry name" value="Transl_B-barrel_sf"/>
</dbReference>
<dbReference type="NCBIfam" id="TIGR02273">
    <property type="entry name" value="16S_RimM"/>
    <property type="match status" value="1"/>
</dbReference>
<dbReference type="PANTHER" id="PTHR33692">
    <property type="entry name" value="RIBOSOME MATURATION FACTOR RIMM"/>
    <property type="match status" value="1"/>
</dbReference>
<dbReference type="PANTHER" id="PTHR33692:SF1">
    <property type="entry name" value="RIBOSOME MATURATION FACTOR RIMM"/>
    <property type="match status" value="1"/>
</dbReference>
<dbReference type="Pfam" id="PF24986">
    <property type="entry name" value="PRC_RimM"/>
    <property type="match status" value="1"/>
</dbReference>
<dbReference type="Pfam" id="PF01782">
    <property type="entry name" value="RimM"/>
    <property type="match status" value="1"/>
</dbReference>
<dbReference type="SUPFAM" id="SSF50346">
    <property type="entry name" value="PRC-barrel domain"/>
    <property type="match status" value="1"/>
</dbReference>
<dbReference type="SUPFAM" id="SSF50447">
    <property type="entry name" value="Translation proteins"/>
    <property type="match status" value="1"/>
</dbReference>